<geneLocation type="mitochondrion"/>
<comment type="function">
    <text evidence="2">Component of the ubiquinol-cytochrome c reductase complex (complex III or cytochrome b-c1 complex) that is part of the mitochondrial respiratory chain. The b-c1 complex mediates electron transfer from ubiquinol to cytochrome c. Contributes to the generation of a proton gradient across the mitochondrial membrane that is then used for ATP synthesis.</text>
</comment>
<comment type="cofactor">
    <cofactor evidence="2">
        <name>heme b</name>
        <dbReference type="ChEBI" id="CHEBI:60344"/>
    </cofactor>
    <text evidence="2">Binds 2 heme b groups non-covalently.</text>
</comment>
<comment type="subunit">
    <text evidence="2">The cytochrome bc1 complex contains 11 subunits: 3 respiratory subunits (MT-CYB, CYC1 and UQCRFS1), 2 core proteins (UQCRC1 and UQCRC2) and 6 low-molecular weight proteins (UQCRH/QCR6, UQCRB/QCR7, UQCRQ/QCR8, UQCR10/QCR9, UQCR11/QCR10 and a cleavage product of UQCRFS1). This cytochrome bc1 complex then forms a dimer.</text>
</comment>
<comment type="subcellular location">
    <subcellularLocation>
        <location evidence="2">Mitochondrion inner membrane</location>
        <topology evidence="2">Multi-pass membrane protein</topology>
    </subcellularLocation>
</comment>
<comment type="miscellaneous">
    <text evidence="1">Heme 1 (or BL or b562) is low-potential and absorbs at about 562 nm, and heme 2 (or BH or b566) is high-potential and absorbs at about 566 nm.</text>
</comment>
<comment type="similarity">
    <text evidence="3 4">Belongs to the cytochrome b family.</text>
</comment>
<comment type="caution">
    <text evidence="2">The full-length protein contains only eight transmembrane helices, not nine as predicted by bioinformatics tools.</text>
</comment>
<accession>Q34289</accession>
<dbReference type="EMBL" id="U07580">
    <property type="protein sequence ID" value="AAB88758.1"/>
    <property type="molecule type" value="Genomic_DNA"/>
</dbReference>
<dbReference type="SMR" id="Q34289"/>
<dbReference type="GO" id="GO:0005743">
    <property type="term" value="C:mitochondrial inner membrane"/>
    <property type="evidence" value="ECO:0007669"/>
    <property type="project" value="UniProtKB-SubCell"/>
</dbReference>
<dbReference type="GO" id="GO:0045275">
    <property type="term" value="C:respiratory chain complex III"/>
    <property type="evidence" value="ECO:0007669"/>
    <property type="project" value="InterPro"/>
</dbReference>
<dbReference type="GO" id="GO:0046872">
    <property type="term" value="F:metal ion binding"/>
    <property type="evidence" value="ECO:0007669"/>
    <property type="project" value="UniProtKB-KW"/>
</dbReference>
<dbReference type="GO" id="GO:0008121">
    <property type="term" value="F:ubiquinol-cytochrome-c reductase activity"/>
    <property type="evidence" value="ECO:0007669"/>
    <property type="project" value="InterPro"/>
</dbReference>
<dbReference type="GO" id="GO:0006122">
    <property type="term" value="P:mitochondrial electron transport, ubiquinol to cytochrome c"/>
    <property type="evidence" value="ECO:0007669"/>
    <property type="project" value="TreeGrafter"/>
</dbReference>
<dbReference type="CDD" id="cd00290">
    <property type="entry name" value="cytochrome_b_C"/>
    <property type="match status" value="1"/>
</dbReference>
<dbReference type="CDD" id="cd00284">
    <property type="entry name" value="Cytochrome_b_N"/>
    <property type="match status" value="1"/>
</dbReference>
<dbReference type="FunFam" id="1.20.810.10:FF:000002">
    <property type="entry name" value="Cytochrome b"/>
    <property type="match status" value="1"/>
</dbReference>
<dbReference type="Gene3D" id="1.20.810.10">
    <property type="entry name" value="Cytochrome Bc1 Complex, Chain C"/>
    <property type="match status" value="1"/>
</dbReference>
<dbReference type="InterPro" id="IPR005798">
    <property type="entry name" value="Cyt_b/b6_C"/>
</dbReference>
<dbReference type="InterPro" id="IPR036150">
    <property type="entry name" value="Cyt_b/b6_C_sf"/>
</dbReference>
<dbReference type="InterPro" id="IPR005797">
    <property type="entry name" value="Cyt_b/b6_N"/>
</dbReference>
<dbReference type="InterPro" id="IPR027387">
    <property type="entry name" value="Cytb/b6-like_sf"/>
</dbReference>
<dbReference type="InterPro" id="IPR030689">
    <property type="entry name" value="Cytochrome_b"/>
</dbReference>
<dbReference type="InterPro" id="IPR048260">
    <property type="entry name" value="Cytochrome_b_C_euk/bac"/>
</dbReference>
<dbReference type="InterPro" id="IPR048259">
    <property type="entry name" value="Cytochrome_b_N_euk/bac"/>
</dbReference>
<dbReference type="InterPro" id="IPR016174">
    <property type="entry name" value="Di-haem_cyt_TM"/>
</dbReference>
<dbReference type="PANTHER" id="PTHR19271">
    <property type="entry name" value="CYTOCHROME B"/>
    <property type="match status" value="1"/>
</dbReference>
<dbReference type="PANTHER" id="PTHR19271:SF16">
    <property type="entry name" value="CYTOCHROME B"/>
    <property type="match status" value="1"/>
</dbReference>
<dbReference type="Pfam" id="PF00032">
    <property type="entry name" value="Cytochrom_B_C"/>
    <property type="match status" value="1"/>
</dbReference>
<dbReference type="Pfam" id="PF00033">
    <property type="entry name" value="Cytochrome_B"/>
    <property type="match status" value="1"/>
</dbReference>
<dbReference type="PIRSF" id="PIRSF038885">
    <property type="entry name" value="COB"/>
    <property type="match status" value="1"/>
</dbReference>
<dbReference type="SUPFAM" id="SSF81648">
    <property type="entry name" value="a domain/subunit of cytochrome bc1 complex (Ubiquinol-cytochrome c reductase)"/>
    <property type="match status" value="1"/>
</dbReference>
<dbReference type="SUPFAM" id="SSF81342">
    <property type="entry name" value="Transmembrane di-heme cytochromes"/>
    <property type="match status" value="1"/>
</dbReference>
<dbReference type="PROSITE" id="PS51003">
    <property type="entry name" value="CYTB_CTER"/>
    <property type="match status" value="1"/>
</dbReference>
<dbReference type="PROSITE" id="PS51002">
    <property type="entry name" value="CYTB_NTER"/>
    <property type="match status" value="1"/>
</dbReference>
<feature type="chain" id="PRO_0000060861" description="Cytochrome b">
    <location>
        <begin position="1"/>
        <end position="381"/>
    </location>
</feature>
<feature type="transmembrane region" description="Helical" evidence="2">
    <location>
        <begin position="33"/>
        <end position="53"/>
    </location>
</feature>
<feature type="transmembrane region" description="Helical" evidence="2">
    <location>
        <begin position="77"/>
        <end position="98"/>
    </location>
</feature>
<feature type="transmembrane region" description="Helical" evidence="2">
    <location>
        <begin position="113"/>
        <end position="133"/>
    </location>
</feature>
<feature type="transmembrane region" description="Helical" evidence="2">
    <location>
        <begin position="178"/>
        <end position="198"/>
    </location>
</feature>
<feature type="transmembrane region" description="Helical" evidence="2">
    <location>
        <begin position="226"/>
        <end position="246"/>
    </location>
</feature>
<feature type="transmembrane region" description="Helical" evidence="2">
    <location>
        <begin position="288"/>
        <end position="308"/>
    </location>
</feature>
<feature type="transmembrane region" description="Helical" evidence="2">
    <location>
        <begin position="320"/>
        <end position="340"/>
    </location>
</feature>
<feature type="transmembrane region" description="Helical" evidence="2">
    <location>
        <begin position="347"/>
        <end position="367"/>
    </location>
</feature>
<feature type="binding site" description="axial binding residue" evidence="2">
    <location>
        <position position="83"/>
    </location>
    <ligand>
        <name>heme b</name>
        <dbReference type="ChEBI" id="CHEBI:60344"/>
        <label>b562</label>
    </ligand>
    <ligandPart>
        <name>Fe</name>
        <dbReference type="ChEBI" id="CHEBI:18248"/>
    </ligandPart>
</feature>
<feature type="binding site" description="axial binding residue" evidence="2">
    <location>
        <position position="97"/>
    </location>
    <ligand>
        <name>heme b</name>
        <dbReference type="ChEBI" id="CHEBI:60344"/>
        <label>b566</label>
    </ligand>
    <ligandPart>
        <name>Fe</name>
        <dbReference type="ChEBI" id="CHEBI:18248"/>
    </ligandPart>
</feature>
<feature type="binding site" description="axial binding residue" evidence="2">
    <location>
        <position position="182"/>
    </location>
    <ligand>
        <name>heme b</name>
        <dbReference type="ChEBI" id="CHEBI:60344"/>
        <label>b562</label>
    </ligand>
    <ligandPart>
        <name>Fe</name>
        <dbReference type="ChEBI" id="CHEBI:18248"/>
    </ligandPart>
</feature>
<feature type="binding site" description="axial binding residue" evidence="2">
    <location>
        <position position="196"/>
    </location>
    <ligand>
        <name>heme b</name>
        <dbReference type="ChEBI" id="CHEBI:60344"/>
        <label>b566</label>
    </ligand>
    <ligandPart>
        <name>Fe</name>
        <dbReference type="ChEBI" id="CHEBI:18248"/>
    </ligandPart>
</feature>
<feature type="binding site" evidence="2">
    <location>
        <position position="201"/>
    </location>
    <ligand>
        <name>a ubiquinone</name>
        <dbReference type="ChEBI" id="CHEBI:16389"/>
    </ligand>
</feature>
<name>CYB_DASAL</name>
<reference key="1">
    <citation type="journal article" date="1994" name="J. Mammal. Evol.">
        <title>Phylogenetic structure of the marsupial family Dasyuridae based on cytochrome-b DNA sequences.</title>
        <authorList>
            <person name="Krajewski C."/>
            <person name="Painter J."/>
            <person name="Buckley L."/>
            <person name="Westerman M."/>
        </authorList>
    </citation>
    <scope>NUCLEOTIDE SEQUENCE [GENOMIC DNA]</scope>
</reference>
<sequence>MINMRKTHPLLKIINHSFIDLPAPSNISAWWNFGSLLGVCLIIQILTGLFLAMHYTSDTLTAFSSVAHICRDVNHGWLLRNLHANGASMFFMCLFLHVGRGIYYGSYLYKETWNIGVILLLTVMATAFVGYVLPWGQMSFWGATVITNLLSAIPYIGTTLAEWIWGGFAVDKATLTRFFAFHFILPFIIMALAIVHLLFLHETGSNNPSGINPDSDKIPFHPYYTIKDALGFMLLLLMLLLLALFSPDLLGDPDNFSPANPLNTPPHIKPEWYFLFAYAILRSIPNKLGGVLALLASILILLIIPLLHTANQRSMMFRPISQTLFWILTANLITLTWIGGQPVEQPFIIIGQLASMLYFTLILILMPLAGLFENYMLKPKW</sequence>
<evidence type="ECO:0000250" key="1"/>
<evidence type="ECO:0000250" key="2">
    <source>
        <dbReference type="UniProtKB" id="P00157"/>
    </source>
</evidence>
<evidence type="ECO:0000255" key="3">
    <source>
        <dbReference type="PROSITE-ProRule" id="PRU00967"/>
    </source>
</evidence>
<evidence type="ECO:0000255" key="4">
    <source>
        <dbReference type="PROSITE-ProRule" id="PRU00968"/>
    </source>
</evidence>
<protein>
    <recommendedName>
        <fullName>Cytochrome b</fullName>
    </recommendedName>
    <alternativeName>
        <fullName>Complex III subunit 3</fullName>
    </alternativeName>
    <alternativeName>
        <fullName>Complex III subunit III</fullName>
    </alternativeName>
    <alternativeName>
        <fullName>Cytochrome b-c1 complex subunit 3</fullName>
    </alternativeName>
    <alternativeName>
        <fullName>Ubiquinol-cytochrome-c reductase complex cytochrome b subunit</fullName>
    </alternativeName>
</protein>
<gene>
    <name type="primary">MT-CYB</name>
    <name type="synonym">COB</name>
    <name type="synonym">CYTB</name>
    <name type="synonym">MTCYB</name>
</gene>
<proteinExistence type="inferred from homology"/>
<organism>
    <name type="scientific">Dasyurus albopunctatus</name>
    <name type="common">Native cat</name>
    <name type="synonym">New Guinean quoll</name>
    <dbReference type="NCBI Taxonomy" id="32545"/>
    <lineage>
        <taxon>Eukaryota</taxon>
        <taxon>Metazoa</taxon>
        <taxon>Chordata</taxon>
        <taxon>Craniata</taxon>
        <taxon>Vertebrata</taxon>
        <taxon>Euteleostomi</taxon>
        <taxon>Mammalia</taxon>
        <taxon>Metatheria</taxon>
        <taxon>Dasyuromorphia</taxon>
        <taxon>Dasyuridae</taxon>
        <taxon>Dasyurus</taxon>
    </lineage>
</organism>
<keyword id="KW-0249">Electron transport</keyword>
<keyword id="KW-0349">Heme</keyword>
<keyword id="KW-0408">Iron</keyword>
<keyword id="KW-0472">Membrane</keyword>
<keyword id="KW-0479">Metal-binding</keyword>
<keyword id="KW-0496">Mitochondrion</keyword>
<keyword id="KW-0999">Mitochondrion inner membrane</keyword>
<keyword id="KW-0679">Respiratory chain</keyword>
<keyword id="KW-0812">Transmembrane</keyword>
<keyword id="KW-1133">Transmembrane helix</keyword>
<keyword id="KW-0813">Transport</keyword>
<keyword id="KW-0830">Ubiquinone</keyword>